<reference key="1">
    <citation type="journal article" date="1985" name="FEBS Lett.">
        <title>Amino acid sequences of allophycocyanin alpha- and beta-subunits isolated from Anabaena cylindrica.</title>
        <authorList>
            <person name="Minami Y."/>
            <person name="Yamada F."/>
            <person name="Hase T."/>
            <person name="Matsubara H."/>
            <person name="Murakami A."/>
            <person name="Fujita Y."/>
            <person name="Takao T."/>
            <person name="Shimonishi Y."/>
        </authorList>
    </citation>
    <scope>PROTEIN SEQUENCE</scope>
</reference>
<reference key="2">
    <citation type="journal article" date="1986" name="J. Biol. Chem.">
        <title>Post-translational methylation of asparaginyl residues. Identification of beta-71 gamma-N-methylasparagine in allophycocyanin.</title>
        <authorList>
            <person name="Klotz A.V."/>
            <person name="Leary J.A."/>
            <person name="Glazer A.N."/>
        </authorList>
    </citation>
    <scope>SEQUENCE REVISION TO 71</scope>
    <scope>METHYLATION AT ASN-71</scope>
</reference>
<evidence type="ECO:0000250" key="1"/>
<evidence type="ECO:0000269" key="2">
    <source>
    </source>
</evidence>
<evidence type="ECO:0000305" key="3"/>
<keyword id="KW-0042">Antenna complex</keyword>
<keyword id="KW-0089">Bile pigment</keyword>
<keyword id="KW-0157">Chromophore</keyword>
<keyword id="KW-0903">Direct protein sequencing</keyword>
<keyword id="KW-0249">Electron transport</keyword>
<keyword id="KW-0472">Membrane</keyword>
<keyword id="KW-0488">Methylation</keyword>
<keyword id="KW-0602">Photosynthesis</keyword>
<keyword id="KW-0605">Phycobilisome</keyword>
<keyword id="KW-0793">Thylakoid</keyword>
<keyword id="KW-0813">Transport</keyword>
<proteinExistence type="evidence at protein level"/>
<name>APCB_ANACY</name>
<protein>
    <recommendedName>
        <fullName>Allophycocyanin beta chain</fullName>
    </recommendedName>
</protein>
<organism>
    <name type="scientific">Anabaena cylindrica</name>
    <dbReference type="NCBI Taxonomy" id="1165"/>
    <lineage>
        <taxon>Bacteria</taxon>
        <taxon>Bacillati</taxon>
        <taxon>Cyanobacteriota</taxon>
        <taxon>Cyanophyceae</taxon>
        <taxon>Nostocales</taxon>
        <taxon>Nostocaceae</taxon>
        <taxon>Anabaena</taxon>
    </lineage>
</organism>
<accession>P07326</accession>
<gene>
    <name type="primary">apcB</name>
</gene>
<comment type="function">
    <text>Light-harvesting photosynthetic bile pigment-protein from the phycobiliprotein complex. Allophycocyanin has a maximum absorption at approximately 650 nanometers.</text>
</comment>
<comment type="subunit">
    <text>Heterodimer of an alpha and a beta chain.</text>
</comment>
<comment type="subcellular location">
    <subcellularLocation>
        <location>Cellular thylakoid membrane</location>
        <topology>Peripheral membrane protein</topology>
        <orientation>Cytoplasmic side</orientation>
    </subcellularLocation>
    <text>Forms the core of the phycobilisome.</text>
</comment>
<comment type="PTM">
    <text evidence="1">Contains one covalently linked phycocyanobilin chromophore.</text>
</comment>
<comment type="similarity">
    <text evidence="3">Belongs to the phycobiliprotein family.</text>
</comment>
<sequence length="161" mass="17316">MQDAITSVINSSDVQGKYLDTAALEKLKGYFATGELRVRAATTISANAAAIVKEAVAKSLLYSDITRPGGNMYTTRRYAACIRDLDYYLRYSTYAMLAGDPSILDERVLNGLKETYNSLGVPVGATVQAIQAMKEVTASLVGPDAGKEMGVYFDYISSGLS</sequence>
<feature type="chain" id="PRO_0000199092" description="Allophycocyanin beta chain">
    <location>
        <begin position="1"/>
        <end position="161"/>
    </location>
</feature>
<feature type="binding site" description="covalent" evidence="1">
    <location>
        <position position="81"/>
    </location>
    <ligand>
        <name>(2R,3E)-phycocyanobilin</name>
        <dbReference type="ChEBI" id="CHEBI:85275"/>
    </ligand>
</feature>
<feature type="modified residue" description="N4-methylasparagine" evidence="2">
    <location>
        <position position="71"/>
    </location>
</feature>
<dbReference type="PIR" id="B24224">
    <property type="entry name" value="AFAIBC"/>
</dbReference>
<dbReference type="SMR" id="P07326"/>
<dbReference type="iPTMnet" id="P07326"/>
<dbReference type="OMA" id="CIRDMDY"/>
<dbReference type="GO" id="GO:0030089">
    <property type="term" value="C:phycobilisome"/>
    <property type="evidence" value="ECO:0007669"/>
    <property type="project" value="UniProtKB-KW"/>
</dbReference>
<dbReference type="GO" id="GO:0031676">
    <property type="term" value="C:plasma membrane-derived thylakoid membrane"/>
    <property type="evidence" value="ECO:0007669"/>
    <property type="project" value="UniProtKB-SubCell"/>
</dbReference>
<dbReference type="GO" id="GO:0015979">
    <property type="term" value="P:photosynthesis"/>
    <property type="evidence" value="ECO:0007669"/>
    <property type="project" value="UniProtKB-KW"/>
</dbReference>
<dbReference type="CDD" id="cd12126">
    <property type="entry name" value="APC_beta"/>
    <property type="match status" value="1"/>
</dbReference>
<dbReference type="Gene3D" id="1.10.490.20">
    <property type="entry name" value="Phycocyanins"/>
    <property type="match status" value="1"/>
</dbReference>
<dbReference type="InterPro" id="IPR006245">
    <property type="entry name" value="Allophycocyanin_b"/>
</dbReference>
<dbReference type="InterPro" id="IPR009050">
    <property type="entry name" value="Globin-like_sf"/>
</dbReference>
<dbReference type="InterPro" id="IPR012128">
    <property type="entry name" value="Phycobilisome_asu/bsu"/>
</dbReference>
<dbReference type="InterPro" id="IPR038719">
    <property type="entry name" value="Phycobilisome_asu/bsu_sf"/>
</dbReference>
<dbReference type="NCBIfam" id="TIGR01337">
    <property type="entry name" value="apcB"/>
    <property type="match status" value="1"/>
</dbReference>
<dbReference type="PANTHER" id="PTHR34011:SF3">
    <property type="entry name" value="ALLOPHYCOCYANIN BETA CHAIN"/>
    <property type="match status" value="1"/>
</dbReference>
<dbReference type="PANTHER" id="PTHR34011">
    <property type="entry name" value="PHYCOBILISOME 32.1 KDA LINKER POLYPEPTIDE, PHYCOCYANIN-ASSOCIATED, ROD 2-RELATED"/>
    <property type="match status" value="1"/>
</dbReference>
<dbReference type="Pfam" id="PF00502">
    <property type="entry name" value="Phycobilisome"/>
    <property type="match status" value="1"/>
</dbReference>
<dbReference type="PIRSF" id="PIRSF000081">
    <property type="entry name" value="Phycocyanin"/>
    <property type="match status" value="1"/>
</dbReference>
<dbReference type="SUPFAM" id="SSF46458">
    <property type="entry name" value="Globin-like"/>
    <property type="match status" value="1"/>
</dbReference>